<reference key="1">
    <citation type="journal article" date="2001" name="Nature">
        <title>Genome sequence of enterohaemorrhagic Escherichia coli O157:H7.</title>
        <authorList>
            <person name="Perna N.T."/>
            <person name="Plunkett G. III"/>
            <person name="Burland V."/>
            <person name="Mau B."/>
            <person name="Glasner J.D."/>
            <person name="Rose D.J."/>
            <person name="Mayhew G.F."/>
            <person name="Evans P.S."/>
            <person name="Gregor J."/>
            <person name="Kirkpatrick H.A."/>
            <person name="Posfai G."/>
            <person name="Hackett J."/>
            <person name="Klink S."/>
            <person name="Boutin A."/>
            <person name="Shao Y."/>
            <person name="Miller L."/>
            <person name="Grotbeck E.J."/>
            <person name="Davis N.W."/>
            <person name="Lim A."/>
            <person name="Dimalanta E.T."/>
            <person name="Potamousis K."/>
            <person name="Apodaca J."/>
            <person name="Anantharaman T.S."/>
            <person name="Lin J."/>
            <person name="Yen G."/>
            <person name="Schwartz D.C."/>
            <person name="Welch R.A."/>
            <person name="Blattner F.R."/>
        </authorList>
    </citation>
    <scope>NUCLEOTIDE SEQUENCE [LARGE SCALE GENOMIC DNA]</scope>
    <source>
        <strain>O157:H7 / EDL933 / ATCC 700927 / EHEC</strain>
    </source>
</reference>
<reference key="2">
    <citation type="journal article" date="2001" name="DNA Res.">
        <title>Complete genome sequence of enterohemorrhagic Escherichia coli O157:H7 and genomic comparison with a laboratory strain K-12.</title>
        <authorList>
            <person name="Hayashi T."/>
            <person name="Makino K."/>
            <person name="Ohnishi M."/>
            <person name="Kurokawa K."/>
            <person name="Ishii K."/>
            <person name="Yokoyama K."/>
            <person name="Han C.-G."/>
            <person name="Ohtsubo E."/>
            <person name="Nakayama K."/>
            <person name="Murata T."/>
            <person name="Tanaka M."/>
            <person name="Tobe T."/>
            <person name="Iida T."/>
            <person name="Takami H."/>
            <person name="Honda T."/>
            <person name="Sasakawa C."/>
            <person name="Ogasawara N."/>
            <person name="Yasunaga T."/>
            <person name="Kuhara S."/>
            <person name="Shiba T."/>
            <person name="Hattori M."/>
            <person name="Shinagawa H."/>
        </authorList>
    </citation>
    <scope>NUCLEOTIDE SEQUENCE [LARGE SCALE GENOMIC DNA]</scope>
    <source>
        <strain>O157:H7 / Sakai / RIMD 0509952 / EHEC</strain>
    </source>
</reference>
<feature type="signal peptide" evidence="1">
    <location>
        <begin position="1"/>
        <end position="21"/>
    </location>
</feature>
<feature type="chain" id="PRO_0000013887" description="Uncharacterized protein YpeC">
    <location>
        <begin position="22"/>
        <end position="108"/>
    </location>
</feature>
<organism>
    <name type="scientific">Escherichia coli O157:H7</name>
    <dbReference type="NCBI Taxonomy" id="83334"/>
    <lineage>
        <taxon>Bacteria</taxon>
        <taxon>Pseudomonadati</taxon>
        <taxon>Pseudomonadota</taxon>
        <taxon>Gammaproteobacteria</taxon>
        <taxon>Enterobacterales</taxon>
        <taxon>Enterobacteriaceae</taxon>
        <taxon>Escherichia</taxon>
    </lineage>
</organism>
<sequence>MFRSLFLAAALMAFTPLAANAGEITLLPSIKLQIGDRDHYGNYWDGGHWRDRDYWHRNYEWRKNRWWRHDNGYHRGWDKRKAYERGYREGWRDRDDHRGKGRGHGHRH</sequence>
<dbReference type="EMBL" id="AE005174">
    <property type="protein sequence ID" value="AAG57516.1"/>
    <property type="molecule type" value="Genomic_DNA"/>
</dbReference>
<dbReference type="EMBL" id="BA000007">
    <property type="protein sequence ID" value="BAB36693.1"/>
    <property type="molecule type" value="Genomic_DNA"/>
</dbReference>
<dbReference type="PIR" id="F91037">
    <property type="entry name" value="F91037"/>
</dbReference>
<dbReference type="PIR" id="H85881">
    <property type="entry name" value="H85881"/>
</dbReference>
<dbReference type="RefSeq" id="NP_311297.1">
    <property type="nucleotide sequence ID" value="NC_002695.1"/>
</dbReference>
<dbReference type="RefSeq" id="WP_000490072.1">
    <property type="nucleotide sequence ID" value="NZ_VOAI01000001.1"/>
</dbReference>
<dbReference type="STRING" id="155864.Z3656"/>
<dbReference type="GeneID" id="915627"/>
<dbReference type="GeneID" id="93774738"/>
<dbReference type="KEGG" id="ece:Z3656"/>
<dbReference type="KEGG" id="ecs:ECs_3270"/>
<dbReference type="PATRIC" id="fig|386585.9.peg.3414"/>
<dbReference type="eggNOG" id="ENOG5031Y28">
    <property type="taxonomic scope" value="Bacteria"/>
</dbReference>
<dbReference type="HOGENOM" id="CLU_135700_2_0_6"/>
<dbReference type="OMA" id="WRGDRWW"/>
<dbReference type="Proteomes" id="UP000000558">
    <property type="component" value="Chromosome"/>
</dbReference>
<dbReference type="Proteomes" id="UP000002519">
    <property type="component" value="Chromosome"/>
</dbReference>
<dbReference type="InterPro" id="IPR019638">
    <property type="entry name" value="DUF2502"/>
</dbReference>
<dbReference type="Pfam" id="PF10697">
    <property type="entry name" value="DUF2502"/>
    <property type="match status" value="1"/>
</dbReference>
<name>YPEC_ECO57</name>
<proteinExistence type="inferred from homology"/>
<evidence type="ECO:0000255" key="1"/>
<evidence type="ECO:0000305" key="2"/>
<comment type="similarity">
    <text evidence="2">To E.coli YaaX.</text>
</comment>
<protein>
    <recommendedName>
        <fullName>Uncharacterized protein YpeC</fullName>
    </recommendedName>
</protein>
<accession>P64543</accession>
<accession>P76527</accession>
<gene>
    <name type="primary">ypeC</name>
    <name type="ordered locus">Z3656</name>
    <name type="ordered locus">ECs3270</name>
</gene>
<keyword id="KW-1185">Reference proteome</keyword>
<keyword id="KW-0732">Signal</keyword>